<keyword id="KW-0963">Cytoplasm</keyword>
<keyword id="KW-0489">Methyltransferase</keyword>
<keyword id="KW-0698">rRNA processing</keyword>
<keyword id="KW-0949">S-adenosyl-L-methionine</keyword>
<keyword id="KW-0808">Transferase</keyword>
<name>RLME_FRATN</name>
<reference key="1">
    <citation type="journal article" date="2007" name="Genome Biol.">
        <title>Comparison of Francisella tularensis genomes reveals evolutionary events associated with the emergence of human pathogenic strains.</title>
        <authorList>
            <person name="Rohmer L."/>
            <person name="Fong C."/>
            <person name="Abmayr S."/>
            <person name="Wasnick M."/>
            <person name="Larson Freeman T.J."/>
            <person name="Radey M."/>
            <person name="Guina T."/>
            <person name="Svensson K."/>
            <person name="Hayden H.S."/>
            <person name="Jacobs M."/>
            <person name="Gallagher L.A."/>
            <person name="Manoil C."/>
            <person name="Ernst R.K."/>
            <person name="Drees B."/>
            <person name="Buckley D."/>
            <person name="Haugen E."/>
            <person name="Bovee D."/>
            <person name="Zhou Y."/>
            <person name="Chang J."/>
            <person name="Levy R."/>
            <person name="Lim R."/>
            <person name="Gillett W."/>
            <person name="Guenthener D."/>
            <person name="Kang A."/>
            <person name="Shaffer S.A."/>
            <person name="Taylor G."/>
            <person name="Chen J."/>
            <person name="Gallis B."/>
            <person name="D'Argenio D.A."/>
            <person name="Forsman M."/>
            <person name="Olson M.V."/>
            <person name="Goodlett D.R."/>
            <person name="Kaul R."/>
            <person name="Miller S.I."/>
            <person name="Brittnacher M.J."/>
        </authorList>
    </citation>
    <scope>NUCLEOTIDE SEQUENCE [LARGE SCALE GENOMIC DNA]</scope>
    <source>
        <strain>U112</strain>
    </source>
</reference>
<dbReference type="EC" id="2.1.1.166" evidence="1"/>
<dbReference type="EMBL" id="CP000439">
    <property type="protein sequence ID" value="ABK89341.1"/>
    <property type="molecule type" value="Genomic_DNA"/>
</dbReference>
<dbReference type="RefSeq" id="WP_003038460.1">
    <property type="nucleotide sequence ID" value="NC_008601.1"/>
</dbReference>
<dbReference type="SMR" id="A0Q526"/>
<dbReference type="KEGG" id="ftn:FTN_0438"/>
<dbReference type="KEGG" id="ftx:AW25_1596"/>
<dbReference type="BioCyc" id="FTUL401614:G1G75-457-MONOMER"/>
<dbReference type="Proteomes" id="UP000000762">
    <property type="component" value="Chromosome"/>
</dbReference>
<dbReference type="GO" id="GO:0005737">
    <property type="term" value="C:cytoplasm"/>
    <property type="evidence" value="ECO:0007669"/>
    <property type="project" value="UniProtKB-SubCell"/>
</dbReference>
<dbReference type="GO" id="GO:0008650">
    <property type="term" value="F:rRNA (uridine-2'-O-)-methyltransferase activity"/>
    <property type="evidence" value="ECO:0007669"/>
    <property type="project" value="UniProtKB-UniRule"/>
</dbReference>
<dbReference type="FunFam" id="3.40.50.150:FF:000005">
    <property type="entry name" value="Ribosomal RNA large subunit methyltransferase E"/>
    <property type="match status" value="1"/>
</dbReference>
<dbReference type="Gene3D" id="3.40.50.150">
    <property type="entry name" value="Vaccinia Virus protein VP39"/>
    <property type="match status" value="1"/>
</dbReference>
<dbReference type="HAMAP" id="MF_01547">
    <property type="entry name" value="RNA_methyltr_E"/>
    <property type="match status" value="1"/>
</dbReference>
<dbReference type="InterPro" id="IPR050082">
    <property type="entry name" value="RNA_methyltr_RlmE"/>
</dbReference>
<dbReference type="InterPro" id="IPR002877">
    <property type="entry name" value="RNA_MeTrfase_FtsJ_dom"/>
</dbReference>
<dbReference type="InterPro" id="IPR015507">
    <property type="entry name" value="rRNA-MeTfrase_E"/>
</dbReference>
<dbReference type="InterPro" id="IPR029063">
    <property type="entry name" value="SAM-dependent_MTases_sf"/>
</dbReference>
<dbReference type="NCBIfam" id="NF008390">
    <property type="entry name" value="PRK11188.1"/>
    <property type="match status" value="1"/>
</dbReference>
<dbReference type="PANTHER" id="PTHR10920">
    <property type="entry name" value="RIBOSOMAL RNA METHYLTRANSFERASE"/>
    <property type="match status" value="1"/>
</dbReference>
<dbReference type="PANTHER" id="PTHR10920:SF18">
    <property type="entry name" value="RRNA METHYLTRANSFERASE 2, MITOCHONDRIAL"/>
    <property type="match status" value="1"/>
</dbReference>
<dbReference type="Pfam" id="PF01728">
    <property type="entry name" value="FtsJ"/>
    <property type="match status" value="1"/>
</dbReference>
<dbReference type="PIRSF" id="PIRSF005461">
    <property type="entry name" value="23S_rRNA_mtase"/>
    <property type="match status" value="1"/>
</dbReference>
<dbReference type="SUPFAM" id="SSF53335">
    <property type="entry name" value="S-adenosyl-L-methionine-dependent methyltransferases"/>
    <property type="match status" value="1"/>
</dbReference>
<organism>
    <name type="scientific">Francisella tularensis subsp. novicida (strain U112)</name>
    <dbReference type="NCBI Taxonomy" id="401614"/>
    <lineage>
        <taxon>Bacteria</taxon>
        <taxon>Pseudomonadati</taxon>
        <taxon>Pseudomonadota</taxon>
        <taxon>Gammaproteobacteria</taxon>
        <taxon>Thiotrichales</taxon>
        <taxon>Francisellaceae</taxon>
        <taxon>Francisella</taxon>
    </lineage>
</organism>
<gene>
    <name evidence="1" type="primary">rlmE</name>
    <name evidence="1" type="synonym">ftsJ</name>
    <name evidence="1" type="synonym">rrmJ</name>
    <name type="ordered locus">FTN_0438</name>
</gene>
<feature type="chain" id="PRO_0000282748" description="Ribosomal RNA large subunit methyltransferase E">
    <location>
        <begin position="1"/>
        <end position="206"/>
    </location>
</feature>
<feature type="active site" description="Proton acceptor" evidence="1">
    <location>
        <position position="161"/>
    </location>
</feature>
<feature type="binding site" evidence="1">
    <location>
        <position position="60"/>
    </location>
    <ligand>
        <name>S-adenosyl-L-methionine</name>
        <dbReference type="ChEBI" id="CHEBI:59789"/>
    </ligand>
</feature>
<feature type="binding site" evidence="1">
    <location>
        <position position="62"/>
    </location>
    <ligand>
        <name>S-adenosyl-L-methionine</name>
        <dbReference type="ChEBI" id="CHEBI:59789"/>
    </ligand>
</feature>
<feature type="binding site" evidence="1">
    <location>
        <position position="80"/>
    </location>
    <ligand>
        <name>S-adenosyl-L-methionine</name>
        <dbReference type="ChEBI" id="CHEBI:59789"/>
    </ligand>
</feature>
<feature type="binding site" evidence="1">
    <location>
        <position position="96"/>
    </location>
    <ligand>
        <name>S-adenosyl-L-methionine</name>
        <dbReference type="ChEBI" id="CHEBI:59789"/>
    </ligand>
</feature>
<feature type="binding site" evidence="1">
    <location>
        <position position="121"/>
    </location>
    <ligand>
        <name>S-adenosyl-L-methionine</name>
        <dbReference type="ChEBI" id="CHEBI:59789"/>
    </ligand>
</feature>
<sequence length="206" mass="23158">MSKGSSTKKWLHEHTSDYYVIQANKLGYRSRASFKILEIQNKYQLFKPNMFVVDLGAAPGGWSEQVIKYIGKNGKLIALDLLEMAPIAGVEFIQGDFSSDETYQKLNTLVNNQKIDCVISDMAPNLSGNKTSDQAKSIYLLELALDFANTNLNKNGSFVAKVFQGQGSDEYLKLVRESFNKVIQFKPKSSRAKSREFYVIATEFKG</sequence>
<protein>
    <recommendedName>
        <fullName evidence="1">Ribosomal RNA large subunit methyltransferase E</fullName>
        <ecNumber evidence="1">2.1.1.166</ecNumber>
    </recommendedName>
    <alternativeName>
        <fullName evidence="1">23S rRNA Um2552 methyltransferase</fullName>
    </alternativeName>
    <alternativeName>
        <fullName evidence="1">rRNA (uridine-2'-O-)-methyltransferase</fullName>
    </alternativeName>
</protein>
<accession>A0Q526</accession>
<comment type="function">
    <text evidence="1">Specifically methylates the uridine in position 2552 of 23S rRNA at the 2'-O position of the ribose in the fully assembled 50S ribosomal subunit.</text>
</comment>
<comment type="catalytic activity">
    <reaction evidence="1">
        <text>uridine(2552) in 23S rRNA + S-adenosyl-L-methionine = 2'-O-methyluridine(2552) in 23S rRNA + S-adenosyl-L-homocysteine + H(+)</text>
        <dbReference type="Rhea" id="RHEA:42720"/>
        <dbReference type="Rhea" id="RHEA-COMP:10202"/>
        <dbReference type="Rhea" id="RHEA-COMP:10203"/>
        <dbReference type="ChEBI" id="CHEBI:15378"/>
        <dbReference type="ChEBI" id="CHEBI:57856"/>
        <dbReference type="ChEBI" id="CHEBI:59789"/>
        <dbReference type="ChEBI" id="CHEBI:65315"/>
        <dbReference type="ChEBI" id="CHEBI:74478"/>
        <dbReference type="EC" id="2.1.1.166"/>
    </reaction>
</comment>
<comment type="subcellular location">
    <subcellularLocation>
        <location evidence="1">Cytoplasm</location>
    </subcellularLocation>
</comment>
<comment type="similarity">
    <text evidence="1">Belongs to the class I-like SAM-binding methyltransferase superfamily. RNA methyltransferase RlmE family.</text>
</comment>
<evidence type="ECO:0000255" key="1">
    <source>
        <dbReference type="HAMAP-Rule" id="MF_01547"/>
    </source>
</evidence>
<proteinExistence type="inferred from homology"/>